<reference key="1">
    <citation type="journal article" date="2002" name="Proc. Natl. Acad. Sci. U.S.A.">
        <title>The genome sequence of Bifidobacterium longum reflects its adaptation to the human gastrointestinal tract.</title>
        <authorList>
            <person name="Schell M.A."/>
            <person name="Karmirantzou M."/>
            <person name="Snel B."/>
            <person name="Vilanova D."/>
            <person name="Berger B."/>
            <person name="Pessi G."/>
            <person name="Zwahlen M.-C."/>
            <person name="Desiere F."/>
            <person name="Bork P."/>
            <person name="Delley M."/>
            <person name="Pridmore R.D."/>
            <person name="Arigoni F."/>
        </authorList>
    </citation>
    <scope>NUCLEOTIDE SEQUENCE [LARGE SCALE GENOMIC DNA]</scope>
    <source>
        <strain>NCC 2705</strain>
    </source>
</reference>
<proteinExistence type="inferred from homology"/>
<protein>
    <recommendedName>
        <fullName evidence="1">Endoribonuclease YbeY</fullName>
        <ecNumber evidence="1">3.1.-.-</ecNumber>
    </recommendedName>
</protein>
<dbReference type="EC" id="3.1.-.-" evidence="1"/>
<dbReference type="EMBL" id="AE014295">
    <property type="protein sequence ID" value="AAN24674.1"/>
    <property type="molecule type" value="Genomic_DNA"/>
</dbReference>
<dbReference type="RefSeq" id="NP_696038.1">
    <property type="nucleotide sequence ID" value="NC_004307.2"/>
</dbReference>
<dbReference type="RefSeq" id="WP_007052156.1">
    <property type="nucleotide sequence ID" value="NC_004307.2"/>
</dbReference>
<dbReference type="SMR" id="Q8G5Z0"/>
<dbReference type="STRING" id="206672.BL0861"/>
<dbReference type="EnsemblBacteria" id="AAN24674">
    <property type="protein sequence ID" value="AAN24674"/>
    <property type="gene ID" value="BL0861"/>
</dbReference>
<dbReference type="GeneID" id="69577999"/>
<dbReference type="KEGG" id="blo:BL0861"/>
<dbReference type="PATRIC" id="fig|206672.9.peg.555"/>
<dbReference type="HOGENOM" id="CLU_106710_3_2_11"/>
<dbReference type="OrthoDB" id="9807740at2"/>
<dbReference type="PhylomeDB" id="Q8G5Z0"/>
<dbReference type="Proteomes" id="UP000000439">
    <property type="component" value="Chromosome"/>
</dbReference>
<dbReference type="GO" id="GO:0005737">
    <property type="term" value="C:cytoplasm"/>
    <property type="evidence" value="ECO:0007669"/>
    <property type="project" value="UniProtKB-SubCell"/>
</dbReference>
<dbReference type="GO" id="GO:0004222">
    <property type="term" value="F:metalloendopeptidase activity"/>
    <property type="evidence" value="ECO:0007669"/>
    <property type="project" value="InterPro"/>
</dbReference>
<dbReference type="GO" id="GO:0004521">
    <property type="term" value="F:RNA endonuclease activity"/>
    <property type="evidence" value="ECO:0007669"/>
    <property type="project" value="UniProtKB-UniRule"/>
</dbReference>
<dbReference type="GO" id="GO:0008270">
    <property type="term" value="F:zinc ion binding"/>
    <property type="evidence" value="ECO:0007669"/>
    <property type="project" value="UniProtKB-UniRule"/>
</dbReference>
<dbReference type="GO" id="GO:0006364">
    <property type="term" value="P:rRNA processing"/>
    <property type="evidence" value="ECO:0007669"/>
    <property type="project" value="UniProtKB-UniRule"/>
</dbReference>
<dbReference type="Gene3D" id="3.40.390.30">
    <property type="entry name" value="Metalloproteases ('zincins'), catalytic domain"/>
    <property type="match status" value="1"/>
</dbReference>
<dbReference type="HAMAP" id="MF_00009">
    <property type="entry name" value="Endoribonucl_YbeY"/>
    <property type="match status" value="1"/>
</dbReference>
<dbReference type="InterPro" id="IPR023091">
    <property type="entry name" value="MetalPrtase_cat_dom_sf_prd"/>
</dbReference>
<dbReference type="InterPro" id="IPR002036">
    <property type="entry name" value="YbeY"/>
</dbReference>
<dbReference type="InterPro" id="IPR020549">
    <property type="entry name" value="YbeY_CS"/>
</dbReference>
<dbReference type="NCBIfam" id="TIGR00043">
    <property type="entry name" value="rRNA maturation RNase YbeY"/>
    <property type="match status" value="1"/>
</dbReference>
<dbReference type="PANTHER" id="PTHR46986">
    <property type="entry name" value="ENDORIBONUCLEASE YBEY, CHLOROPLASTIC"/>
    <property type="match status" value="1"/>
</dbReference>
<dbReference type="PANTHER" id="PTHR46986:SF1">
    <property type="entry name" value="ENDORIBONUCLEASE YBEY, CHLOROPLASTIC"/>
    <property type="match status" value="1"/>
</dbReference>
<dbReference type="Pfam" id="PF02130">
    <property type="entry name" value="YbeY"/>
    <property type="match status" value="1"/>
</dbReference>
<dbReference type="SUPFAM" id="SSF55486">
    <property type="entry name" value="Metalloproteases ('zincins'), catalytic domain"/>
    <property type="match status" value="1"/>
</dbReference>
<dbReference type="PROSITE" id="PS01306">
    <property type="entry name" value="UPF0054"/>
    <property type="match status" value="1"/>
</dbReference>
<feature type="chain" id="PRO_0000102416" description="Endoribonuclease YbeY">
    <location>
        <begin position="1"/>
        <end position="182"/>
    </location>
</feature>
<feature type="binding site" evidence="1">
    <location>
        <position position="115"/>
    </location>
    <ligand>
        <name>Zn(2+)</name>
        <dbReference type="ChEBI" id="CHEBI:29105"/>
        <note>catalytic</note>
    </ligand>
</feature>
<feature type="binding site" evidence="1">
    <location>
        <position position="119"/>
    </location>
    <ligand>
        <name>Zn(2+)</name>
        <dbReference type="ChEBI" id="CHEBI:29105"/>
        <note>catalytic</note>
    </ligand>
</feature>
<feature type="binding site" evidence="1">
    <location>
        <position position="125"/>
    </location>
    <ligand>
        <name>Zn(2+)</name>
        <dbReference type="ChEBI" id="CHEBI:29105"/>
        <note>catalytic</note>
    </ligand>
</feature>
<organism>
    <name type="scientific">Bifidobacterium longum (strain NCC 2705)</name>
    <dbReference type="NCBI Taxonomy" id="206672"/>
    <lineage>
        <taxon>Bacteria</taxon>
        <taxon>Bacillati</taxon>
        <taxon>Actinomycetota</taxon>
        <taxon>Actinomycetes</taxon>
        <taxon>Bifidobacteriales</taxon>
        <taxon>Bifidobacteriaceae</taxon>
        <taxon>Bifidobacterium</taxon>
    </lineage>
</organism>
<gene>
    <name evidence="1" type="primary">ybeY</name>
    <name type="ordered locus">BL0861</name>
</gene>
<keyword id="KW-0963">Cytoplasm</keyword>
<keyword id="KW-0255">Endonuclease</keyword>
<keyword id="KW-0378">Hydrolase</keyword>
<keyword id="KW-0479">Metal-binding</keyword>
<keyword id="KW-0540">Nuclease</keyword>
<keyword id="KW-1185">Reference proteome</keyword>
<keyword id="KW-0690">Ribosome biogenesis</keyword>
<keyword id="KW-0698">rRNA processing</keyword>
<keyword id="KW-0862">Zinc</keyword>
<name>YBEY_BIFLO</name>
<sequence length="182" mass="20153">MSVDVTNETQWVIDPKVFSDLGIWVLDQMRVSTQSDLTIMFVDPDPIAELHMRWMNLEGPTDVMSFPMDELRPGDGKTVMEGVLGDIVICPWVAAQQAAAAGHSTMQEMLLLTIHGILHLLGYDHVTPEQERQMFGLQRQLLLTFFALRHDANVQATLPAGTPDALALYDAAHGAGRDLDSK</sequence>
<accession>Q8G5Z0</accession>
<evidence type="ECO:0000255" key="1">
    <source>
        <dbReference type="HAMAP-Rule" id="MF_00009"/>
    </source>
</evidence>
<comment type="function">
    <text evidence="1">Single strand-specific metallo-endoribonuclease involved in late-stage 70S ribosome quality control and in maturation of the 3' terminus of the 16S rRNA.</text>
</comment>
<comment type="cofactor">
    <cofactor evidence="1">
        <name>Zn(2+)</name>
        <dbReference type="ChEBI" id="CHEBI:29105"/>
    </cofactor>
    <text evidence="1">Binds 1 zinc ion.</text>
</comment>
<comment type="subcellular location">
    <subcellularLocation>
        <location evidence="1">Cytoplasm</location>
    </subcellularLocation>
</comment>
<comment type="similarity">
    <text evidence="1">Belongs to the endoribonuclease YbeY family.</text>
</comment>